<reference key="1">
    <citation type="journal article" date="2005" name="J. Bacteriol.">
        <title>Completion of the genome sequence of Brucella abortus and comparison to the highly similar genomes of Brucella melitensis and Brucella suis.</title>
        <authorList>
            <person name="Halling S.M."/>
            <person name="Peterson-Burch B.D."/>
            <person name="Bricker B.J."/>
            <person name="Zuerner R.L."/>
            <person name="Qing Z."/>
            <person name="Li L.-L."/>
            <person name="Kapur V."/>
            <person name="Alt D.P."/>
            <person name="Olsen S.C."/>
        </authorList>
    </citation>
    <scope>NUCLEOTIDE SEQUENCE [LARGE SCALE GENOMIC DNA]</scope>
    <source>
        <strain>9-941</strain>
    </source>
</reference>
<protein>
    <recommendedName>
        <fullName evidence="1">Large ribosomal subunit protein uL11</fullName>
    </recommendedName>
    <alternativeName>
        <fullName evidence="2">50S ribosomal protein L11</fullName>
    </alternativeName>
</protein>
<name>RL11_BRUAB</name>
<gene>
    <name evidence="1" type="primary">rplK</name>
    <name type="ordered locus">BruAb1_1252</name>
</gene>
<comment type="function">
    <text evidence="1">Forms part of the ribosomal stalk which helps the ribosome interact with GTP-bound translation factors.</text>
</comment>
<comment type="subunit">
    <text evidence="1">Part of the ribosomal stalk of the 50S ribosomal subunit. Interacts with L10 and the large rRNA to form the base of the stalk. L10 forms an elongated spine to which L12 dimers bind in a sequential fashion forming a multimeric L10(L12)X complex.</text>
</comment>
<comment type="PTM">
    <text evidence="1">One or more lysine residues are methylated.</text>
</comment>
<comment type="similarity">
    <text evidence="1">Belongs to the universal ribosomal protein uL11 family.</text>
</comment>
<evidence type="ECO:0000255" key="1">
    <source>
        <dbReference type="HAMAP-Rule" id="MF_00736"/>
    </source>
</evidence>
<evidence type="ECO:0000305" key="2"/>
<sequence length="142" mass="15018">MAKKVAGQLKLQVPAGAANPSPPIGPALGQRGINIMEFCKAFNAASQEMEKGSPIPVLITYYQDKSFTFVMKTPPVTYFLKKAANLKSGSKTPGKASAGTITRDKVRAIAEAKMKDLNAADVEAAMRMIEGSARSMGLEVVG</sequence>
<feature type="chain" id="PRO_0000258126" description="Large ribosomal subunit protein uL11">
    <location>
        <begin position="1"/>
        <end position="142"/>
    </location>
</feature>
<organism>
    <name type="scientific">Brucella abortus biovar 1 (strain 9-941)</name>
    <dbReference type="NCBI Taxonomy" id="262698"/>
    <lineage>
        <taxon>Bacteria</taxon>
        <taxon>Pseudomonadati</taxon>
        <taxon>Pseudomonadota</taxon>
        <taxon>Alphaproteobacteria</taxon>
        <taxon>Hyphomicrobiales</taxon>
        <taxon>Brucellaceae</taxon>
        <taxon>Brucella/Ochrobactrum group</taxon>
        <taxon>Brucella</taxon>
    </lineage>
</organism>
<dbReference type="EMBL" id="AE017223">
    <property type="protein sequence ID" value="AAX74590.1"/>
    <property type="molecule type" value="Genomic_DNA"/>
</dbReference>
<dbReference type="RefSeq" id="WP_002964374.1">
    <property type="nucleotide sequence ID" value="NC_006932.1"/>
</dbReference>
<dbReference type="SMR" id="Q57CP4"/>
<dbReference type="EnsemblBacteria" id="AAX74590">
    <property type="protein sequence ID" value="AAX74590"/>
    <property type="gene ID" value="BruAb1_1252"/>
</dbReference>
<dbReference type="GeneID" id="97533513"/>
<dbReference type="KEGG" id="bmb:BruAb1_1252"/>
<dbReference type="HOGENOM" id="CLU_074237_2_0_5"/>
<dbReference type="Proteomes" id="UP000000540">
    <property type="component" value="Chromosome I"/>
</dbReference>
<dbReference type="GO" id="GO:0022625">
    <property type="term" value="C:cytosolic large ribosomal subunit"/>
    <property type="evidence" value="ECO:0007669"/>
    <property type="project" value="TreeGrafter"/>
</dbReference>
<dbReference type="GO" id="GO:0070180">
    <property type="term" value="F:large ribosomal subunit rRNA binding"/>
    <property type="evidence" value="ECO:0007669"/>
    <property type="project" value="UniProtKB-UniRule"/>
</dbReference>
<dbReference type="GO" id="GO:0003735">
    <property type="term" value="F:structural constituent of ribosome"/>
    <property type="evidence" value="ECO:0007669"/>
    <property type="project" value="InterPro"/>
</dbReference>
<dbReference type="GO" id="GO:0006412">
    <property type="term" value="P:translation"/>
    <property type="evidence" value="ECO:0007669"/>
    <property type="project" value="UniProtKB-UniRule"/>
</dbReference>
<dbReference type="CDD" id="cd00349">
    <property type="entry name" value="Ribosomal_L11"/>
    <property type="match status" value="1"/>
</dbReference>
<dbReference type="FunFam" id="1.10.10.250:FF:000001">
    <property type="entry name" value="50S ribosomal protein L11"/>
    <property type="match status" value="1"/>
</dbReference>
<dbReference type="FunFam" id="3.30.1550.10:FF:000001">
    <property type="entry name" value="50S ribosomal protein L11"/>
    <property type="match status" value="1"/>
</dbReference>
<dbReference type="Gene3D" id="1.10.10.250">
    <property type="entry name" value="Ribosomal protein L11, C-terminal domain"/>
    <property type="match status" value="1"/>
</dbReference>
<dbReference type="Gene3D" id="3.30.1550.10">
    <property type="entry name" value="Ribosomal protein L11/L12, N-terminal domain"/>
    <property type="match status" value="1"/>
</dbReference>
<dbReference type="HAMAP" id="MF_00736">
    <property type="entry name" value="Ribosomal_uL11"/>
    <property type="match status" value="1"/>
</dbReference>
<dbReference type="InterPro" id="IPR000911">
    <property type="entry name" value="Ribosomal_uL11"/>
</dbReference>
<dbReference type="InterPro" id="IPR006519">
    <property type="entry name" value="Ribosomal_uL11_bac-typ"/>
</dbReference>
<dbReference type="InterPro" id="IPR020783">
    <property type="entry name" value="Ribosomal_uL11_C"/>
</dbReference>
<dbReference type="InterPro" id="IPR036769">
    <property type="entry name" value="Ribosomal_uL11_C_sf"/>
</dbReference>
<dbReference type="InterPro" id="IPR020785">
    <property type="entry name" value="Ribosomal_uL11_CS"/>
</dbReference>
<dbReference type="InterPro" id="IPR020784">
    <property type="entry name" value="Ribosomal_uL11_N"/>
</dbReference>
<dbReference type="InterPro" id="IPR036796">
    <property type="entry name" value="Ribosomal_uL11_N_sf"/>
</dbReference>
<dbReference type="NCBIfam" id="TIGR01632">
    <property type="entry name" value="L11_bact"/>
    <property type="match status" value="1"/>
</dbReference>
<dbReference type="PANTHER" id="PTHR11661">
    <property type="entry name" value="60S RIBOSOMAL PROTEIN L12"/>
    <property type="match status" value="1"/>
</dbReference>
<dbReference type="PANTHER" id="PTHR11661:SF1">
    <property type="entry name" value="LARGE RIBOSOMAL SUBUNIT PROTEIN UL11M"/>
    <property type="match status" value="1"/>
</dbReference>
<dbReference type="Pfam" id="PF00298">
    <property type="entry name" value="Ribosomal_L11"/>
    <property type="match status" value="1"/>
</dbReference>
<dbReference type="Pfam" id="PF03946">
    <property type="entry name" value="Ribosomal_L11_N"/>
    <property type="match status" value="1"/>
</dbReference>
<dbReference type="SMART" id="SM00649">
    <property type="entry name" value="RL11"/>
    <property type="match status" value="1"/>
</dbReference>
<dbReference type="SUPFAM" id="SSF54747">
    <property type="entry name" value="Ribosomal L11/L12e N-terminal domain"/>
    <property type="match status" value="1"/>
</dbReference>
<dbReference type="SUPFAM" id="SSF46906">
    <property type="entry name" value="Ribosomal protein L11, C-terminal domain"/>
    <property type="match status" value="1"/>
</dbReference>
<dbReference type="PROSITE" id="PS00359">
    <property type="entry name" value="RIBOSOMAL_L11"/>
    <property type="match status" value="1"/>
</dbReference>
<accession>Q57CP4</accession>
<proteinExistence type="inferred from homology"/>
<keyword id="KW-0488">Methylation</keyword>
<keyword id="KW-0687">Ribonucleoprotein</keyword>
<keyword id="KW-0689">Ribosomal protein</keyword>
<keyword id="KW-0694">RNA-binding</keyword>
<keyword id="KW-0699">rRNA-binding</keyword>